<gene>
    <name type="primary">PSR1</name>
    <name type="ordered locus">YLL010C</name>
    <name type="ORF">L1341</name>
</gene>
<feature type="chain" id="PRO_0000212576" description="Phosphatase PSR1">
    <location>
        <begin position="1"/>
        <end position="427"/>
    </location>
</feature>
<feature type="domain" description="FCP1 homology" evidence="2">
    <location>
        <begin position="253"/>
        <end position="411"/>
    </location>
</feature>
<feature type="region of interest" description="Disordered" evidence="3">
    <location>
        <begin position="14"/>
        <end position="223"/>
    </location>
</feature>
<feature type="compositionally biased region" description="Polar residues" evidence="3">
    <location>
        <begin position="14"/>
        <end position="34"/>
    </location>
</feature>
<feature type="compositionally biased region" description="Basic residues" evidence="3">
    <location>
        <begin position="35"/>
        <end position="48"/>
    </location>
</feature>
<feature type="compositionally biased region" description="Polar residues" evidence="3">
    <location>
        <begin position="49"/>
        <end position="80"/>
    </location>
</feature>
<feature type="compositionally biased region" description="Basic and acidic residues" evidence="3">
    <location>
        <begin position="104"/>
        <end position="118"/>
    </location>
</feature>
<feature type="compositionally biased region" description="Acidic residues" evidence="3">
    <location>
        <begin position="119"/>
        <end position="130"/>
    </location>
</feature>
<feature type="compositionally biased region" description="Basic and acidic residues" evidence="3">
    <location>
        <begin position="131"/>
        <end position="151"/>
    </location>
</feature>
<feature type="compositionally biased region" description="Low complexity" evidence="3">
    <location>
        <begin position="155"/>
        <end position="183"/>
    </location>
</feature>
<feature type="compositionally biased region" description="Polar residues" evidence="3">
    <location>
        <begin position="184"/>
        <end position="214"/>
    </location>
</feature>
<feature type="modified residue" description="Phosphoserine" evidence="13 14">
    <location>
        <position position="110"/>
    </location>
</feature>
<feature type="lipid moiety-binding region" description="S-palmitoyl cysteine" evidence="1 8">
    <location>
        <position position="9"/>
    </location>
</feature>
<feature type="lipid moiety-binding region" description="S-palmitoyl cysteine" evidence="1 8">
    <location>
        <position position="10"/>
    </location>
</feature>
<feature type="cross-link" description="Glycyl lysine isopeptide (Lys-Gly) (interchain with G-Cter in ubiquitin)" evidence="15">
    <location>
        <position position="154"/>
    </location>
</feature>
<feature type="mutagenesis site" description="No effect on membrane association." evidence="4">
    <original>G</original>
    <variation>A</variation>
    <location>
        <position position="2"/>
    </location>
</feature>
<feature type="mutagenesis site" description="Impairs membrane association." evidence="4">
    <original>CC</original>
    <variation>GG</variation>
    <location>
        <begin position="9"/>
        <end position="10"/>
    </location>
</feature>
<feature type="mutagenesis site" description="Low residual phosphatase activity. Loss of stress response functions." evidence="4">
    <original>D</original>
    <variation>E</variation>
    <location>
        <position position="263"/>
    </location>
</feature>
<feature type="mutagenesis site" description="Low residual phosphatase activity. Loss of stress response functions." evidence="4">
    <original>D</original>
    <variation>E</variation>
    <location>
        <position position="265"/>
    </location>
</feature>
<reference evidence="11" key="1">
    <citation type="journal article" date="1996" name="Yeast">
        <title>Sequence analysis of the CEN12 region of Saccharomyces cerevisiae on a 43.7 kb fragment of chromosome XII including an open reading frame homologous to the human cystic fibrosis transmembrane conductance regulator protein CFTR.</title>
        <authorList>
            <person name="Miosga T."/>
            <person name="Zimmermann F.K."/>
        </authorList>
    </citation>
    <scope>NUCLEOTIDE SEQUENCE [GENOMIC DNA]</scope>
    <source>
        <strain>ATCC 90840 / EAY235 / FY23</strain>
    </source>
</reference>
<reference evidence="10 12" key="2">
    <citation type="journal article" date="1997" name="Nature">
        <title>The nucleotide sequence of Saccharomyces cerevisiae chromosome XII.</title>
        <authorList>
            <person name="Johnston M."/>
            <person name="Hillier L.W."/>
            <person name="Riles L."/>
            <person name="Albermann K."/>
            <person name="Andre B."/>
            <person name="Ansorge W."/>
            <person name="Benes V."/>
            <person name="Brueckner M."/>
            <person name="Delius H."/>
            <person name="Dubois E."/>
            <person name="Duesterhoeft A."/>
            <person name="Entian K.-D."/>
            <person name="Floeth M."/>
            <person name="Goffeau A."/>
            <person name="Hebling U."/>
            <person name="Heumann K."/>
            <person name="Heuss-Neitzel D."/>
            <person name="Hilbert H."/>
            <person name="Hilger F."/>
            <person name="Kleine K."/>
            <person name="Koetter P."/>
            <person name="Louis E.J."/>
            <person name="Messenguy F."/>
            <person name="Mewes H.-W."/>
            <person name="Miosga T."/>
            <person name="Moestl D."/>
            <person name="Mueller-Auer S."/>
            <person name="Nentwich U."/>
            <person name="Obermaier B."/>
            <person name="Piravandi E."/>
            <person name="Pohl T.M."/>
            <person name="Portetelle D."/>
            <person name="Purnelle B."/>
            <person name="Rechmann S."/>
            <person name="Rieger M."/>
            <person name="Rinke M."/>
            <person name="Rose M."/>
            <person name="Scharfe M."/>
            <person name="Scherens B."/>
            <person name="Scholler P."/>
            <person name="Schwager C."/>
            <person name="Schwarz S."/>
            <person name="Underwood A.P."/>
            <person name="Urrestarazu L.A."/>
            <person name="Vandenbol M."/>
            <person name="Verhasselt P."/>
            <person name="Vierendeels F."/>
            <person name="Voet M."/>
            <person name="Volckaert G."/>
            <person name="Voss H."/>
            <person name="Wambutt R."/>
            <person name="Wedler E."/>
            <person name="Wedler H."/>
            <person name="Zimmermann F.K."/>
            <person name="Zollner A."/>
            <person name="Hani J."/>
            <person name="Hoheisel J.D."/>
        </authorList>
    </citation>
    <scope>NUCLEOTIDE SEQUENCE [LARGE SCALE GENOMIC DNA]</scope>
    <source>
        <strain>ATCC 204508 / S288c</strain>
    </source>
</reference>
<reference key="3">
    <citation type="journal article" date="2014" name="G3 (Bethesda)">
        <title>The reference genome sequence of Saccharomyces cerevisiae: Then and now.</title>
        <authorList>
            <person name="Engel S.R."/>
            <person name="Dietrich F.S."/>
            <person name="Fisk D.G."/>
            <person name="Binkley G."/>
            <person name="Balakrishnan R."/>
            <person name="Costanzo M.C."/>
            <person name="Dwight S.S."/>
            <person name="Hitz B.C."/>
            <person name="Karra K."/>
            <person name="Nash R.S."/>
            <person name="Weng S."/>
            <person name="Wong E.D."/>
            <person name="Lloyd P."/>
            <person name="Skrzypek M.S."/>
            <person name="Miyasato S.R."/>
            <person name="Simison M."/>
            <person name="Cherry J.M."/>
        </authorList>
    </citation>
    <scope>GENOME REANNOTATION</scope>
    <source>
        <strain>ATCC 204508 / S288c</strain>
    </source>
</reference>
<reference evidence="10" key="4">
    <citation type="journal article" date="2000" name="J. Biol. Chem.">
        <title>Psr1p/Psr2p, two plasma membrane phosphatases with an essential DXDX(T/V) motif required for sodium stress response in yeast.</title>
        <authorList>
            <person name="Siniossoglou S."/>
            <person name="Hurt E.C."/>
            <person name="Pelham H.R.B."/>
        </authorList>
    </citation>
    <scope>FUNCTION</scope>
    <scope>SUBCELLULAR LOCATION</scope>
    <scope>PALMITOYLATION AT CYS-9 AND CYS-10</scope>
    <scope>PHOSPHORYLATION</scope>
    <scope>MUTAGENESIS OF GLY-2; 9-CYS-CYS-10; ASP-263 AND ASP-265</scope>
</reference>
<reference evidence="10" key="5">
    <citation type="journal article" date="2002" name="Genes Cells">
        <title>Yeast Whi2 and Psr1-phosphatase form a complex and regulate STRE-mediated gene expression.</title>
        <authorList>
            <person name="Kaida D."/>
            <person name="Yashiroda H."/>
            <person name="Toh-e A."/>
            <person name="Kikuchi Y."/>
        </authorList>
    </citation>
    <scope>FUNCTION</scope>
    <scope>INTERACTION WITH WHI2</scope>
</reference>
<reference evidence="10" key="6">
    <citation type="journal article" date="2003" name="Nature">
        <title>Global analysis of protein localization in budding yeast.</title>
        <authorList>
            <person name="Huh W.-K."/>
            <person name="Falvo J.V."/>
            <person name="Gerke L.C."/>
            <person name="Carroll A.S."/>
            <person name="Howson R.W."/>
            <person name="Weissman J.S."/>
            <person name="O'Shea E.K."/>
        </authorList>
    </citation>
    <scope>SUBCELLULAR LOCATION [LARGE SCALE ANALYSIS]</scope>
</reference>
<reference key="7">
    <citation type="journal article" date="2003" name="Nature">
        <title>Global analysis of protein expression in yeast.</title>
        <authorList>
            <person name="Ghaemmaghami S."/>
            <person name="Huh W.-K."/>
            <person name="Bower K."/>
            <person name="Howson R.W."/>
            <person name="Belle A."/>
            <person name="Dephoure N."/>
            <person name="O'Shea E.K."/>
            <person name="Weissman J.S."/>
        </authorList>
    </citation>
    <scope>LEVEL OF PROTEIN EXPRESSION [LARGE SCALE ANALYSIS]</scope>
</reference>
<reference key="8">
    <citation type="journal article" date="2007" name="Proc. Natl. Acad. Sci. U.S.A.">
        <title>Analysis of phosphorylation sites on proteins from Saccharomyces cerevisiae by electron transfer dissociation (ETD) mass spectrometry.</title>
        <authorList>
            <person name="Chi A."/>
            <person name="Huttenhower C."/>
            <person name="Geer L.Y."/>
            <person name="Coon J.J."/>
            <person name="Syka J.E.P."/>
            <person name="Bai D.L."/>
            <person name="Shabanowitz J."/>
            <person name="Burke D.J."/>
            <person name="Troyanskaya O.G."/>
            <person name="Hunt D.F."/>
        </authorList>
    </citation>
    <scope>PHOSPHORYLATION [LARGE SCALE ANALYSIS] AT SER-110</scope>
    <scope>IDENTIFICATION BY MASS SPECTROMETRY [LARGE SCALE ANALYSIS]</scope>
</reference>
<reference key="9">
    <citation type="journal article" date="2008" name="Mol. Cell. Proteomics">
        <title>A multidimensional chromatography technology for in-depth phosphoproteome analysis.</title>
        <authorList>
            <person name="Albuquerque C.P."/>
            <person name="Smolka M.B."/>
            <person name="Payne S.H."/>
            <person name="Bafna V."/>
            <person name="Eng J."/>
            <person name="Zhou H."/>
        </authorList>
    </citation>
    <scope>IDENTIFICATION BY MASS SPECTROMETRY [LARGE SCALE ANALYSIS]</scope>
</reference>
<reference key="10">
    <citation type="journal article" date="2009" name="Science">
        <title>Global analysis of Cdk1 substrate phosphorylation sites provides insights into evolution.</title>
        <authorList>
            <person name="Holt L.J."/>
            <person name="Tuch B.B."/>
            <person name="Villen J."/>
            <person name="Johnson A.D."/>
            <person name="Gygi S.P."/>
            <person name="Morgan D.O."/>
        </authorList>
    </citation>
    <scope>PHOSPHORYLATION [LARGE SCALE ANALYSIS] AT SER-110</scope>
    <scope>IDENTIFICATION BY MASS SPECTROMETRY [LARGE SCALE ANALYSIS]</scope>
</reference>
<reference key="11">
    <citation type="journal article" date="2012" name="Proteomics">
        <title>Sites of ubiquitin attachment in Saccharomyces cerevisiae.</title>
        <authorList>
            <person name="Starita L.M."/>
            <person name="Lo R.S."/>
            <person name="Eng J.K."/>
            <person name="von Haller P.D."/>
            <person name="Fields S."/>
        </authorList>
    </citation>
    <scope>UBIQUITINATION [LARGE SCALE ANALYSIS] AT LYS-154</scope>
    <scope>IDENTIFICATION BY MASS SPECTROMETRY [LARGE SCALE ANALYSIS]</scope>
</reference>
<organism>
    <name type="scientific">Saccharomyces cerevisiae (strain ATCC 204508 / S288c)</name>
    <name type="common">Baker's yeast</name>
    <dbReference type="NCBI Taxonomy" id="559292"/>
    <lineage>
        <taxon>Eukaryota</taxon>
        <taxon>Fungi</taxon>
        <taxon>Dikarya</taxon>
        <taxon>Ascomycota</taxon>
        <taxon>Saccharomycotina</taxon>
        <taxon>Saccharomycetes</taxon>
        <taxon>Saccharomycetales</taxon>
        <taxon>Saccharomycetaceae</taxon>
        <taxon>Saccharomyces</taxon>
    </lineage>
</organism>
<sequence length="427" mass="47931">MGFISSILCCSSETTQSNSNSAYRQQQSSSLNKNRSVKHSNTKSRTRGVHQTNSPPSKTNSAATFSSTERSTGKSGISTNDNEKKKPSSPTAAVTATTTNNMTKVEKRISKDDLYEEKYEVDEDEEIDDEDNRRSRGIVQEKGDAVKDTSRQKKQQQQQQQQSQPQPQPQSQSQSQSQSQSQQRGPTVQVSSDHLIQDMNLSRVSSSSQASETSNDADDEDDEDEEYIDLTLLQQGQYHAPGYNTLLPPQDESTKGKKCLILDLDETLVHSSFKYLRSADFVLSVEIDDQVHNVYVIKRPGVEEFLERVGKLFEVVVFTASVSRYGDPLLDILDTDKVIHHRLFREACYNYEGNYIKNLSQIGRPLSDIIILDNSPASYIFHPQHAIPISSWFSDTHDNELLDIIPLLEDLSVKTSLDVGKILDVTI</sequence>
<evidence type="ECO:0000255" key="1"/>
<evidence type="ECO:0000255" key="2">
    <source>
        <dbReference type="PROSITE-ProRule" id="PRU00336"/>
    </source>
</evidence>
<evidence type="ECO:0000256" key="3">
    <source>
        <dbReference type="SAM" id="MobiDB-lite"/>
    </source>
</evidence>
<evidence type="ECO:0000269" key="4">
    <source>
    </source>
</evidence>
<evidence type="ECO:0000269" key="5">
    <source>
    </source>
</evidence>
<evidence type="ECO:0000269" key="6">
    <source>
    </source>
</evidence>
<evidence type="ECO:0000269" key="7">
    <source>
    </source>
</evidence>
<evidence type="ECO:0000303" key="8">
    <source>
    </source>
</evidence>
<evidence type="ECO:0000303" key="9">
    <source>
    </source>
</evidence>
<evidence type="ECO:0000305" key="10"/>
<evidence type="ECO:0000312" key="11">
    <source>
        <dbReference type="EMBL" id="CAA62782.1"/>
    </source>
</evidence>
<evidence type="ECO:0000312" key="12">
    <source>
        <dbReference type="EMBL" id="CAA97454.1"/>
    </source>
</evidence>
<evidence type="ECO:0007744" key="13">
    <source>
    </source>
</evidence>
<evidence type="ECO:0007744" key="14">
    <source>
    </source>
</evidence>
<evidence type="ECO:0007744" key="15">
    <source>
    </source>
</evidence>
<protein>
    <recommendedName>
        <fullName>Phosphatase PSR1</fullName>
        <ecNumber>3.1.3.-</ecNumber>
    </recommendedName>
    <alternativeName>
        <fullName>Plasma membrane sodium response protein 1</fullName>
    </alternativeName>
</protein>
<comment type="function">
    <text evidence="4 5 9">Has phosphatase activity in vitro. Involved in the response to sodium and lithium ion stress (but not to potassium or sorbitol stress) by inducing transcription of the sodium pump ENA1/PMR2. Acts through a calcineurin-independent pathway and is functionally redundant with PSR2. Also involved in the general stress response; acts together with WHI2 to activate stress response element (STRE)-mediated gene expression, possibly through dephosphorylation of MSN2.</text>
</comment>
<comment type="subunit">
    <text evidence="5">Interacts with WHI2.</text>
</comment>
<comment type="interaction">
    <interactant intactId="EBI-31129">
        <id>Q07800</id>
    </interactant>
    <interactant intactId="EBI-20530">
        <id>P12611</id>
        <label>WHI2</label>
    </interactant>
    <organismsDiffer>false</organismsDiffer>
    <experiments>5</experiments>
</comment>
<comment type="subcellular location">
    <subcellularLocation>
        <location evidence="4 6">Cell membrane</location>
    </subcellularLocation>
</comment>
<comment type="miscellaneous">
    <text evidence="7">Present with 5620 molecules/cell in log phase SD medium.</text>
</comment>
<accession>Q07800</accession>
<accession>D6VXZ2</accession>
<keyword id="KW-1003">Cell membrane</keyword>
<keyword id="KW-0378">Hydrolase</keyword>
<keyword id="KW-1017">Isopeptide bond</keyword>
<keyword id="KW-0449">Lipoprotein</keyword>
<keyword id="KW-0472">Membrane</keyword>
<keyword id="KW-0564">Palmitate</keyword>
<keyword id="KW-0597">Phosphoprotein</keyword>
<keyword id="KW-0904">Protein phosphatase</keyword>
<keyword id="KW-1185">Reference proteome</keyword>
<keyword id="KW-0832">Ubl conjugation</keyword>
<name>PSR1_YEAST</name>
<dbReference type="EC" id="3.1.3.-"/>
<dbReference type="EMBL" id="X91488">
    <property type="protein sequence ID" value="CAA62782.1"/>
    <property type="molecule type" value="Genomic_DNA"/>
</dbReference>
<dbReference type="EMBL" id="Z73115">
    <property type="protein sequence ID" value="CAA97454.1"/>
    <property type="molecule type" value="Genomic_DNA"/>
</dbReference>
<dbReference type="EMBL" id="BK006945">
    <property type="protein sequence ID" value="DAA09308.1"/>
    <property type="molecule type" value="Genomic_DNA"/>
</dbReference>
<dbReference type="PIR" id="S64752">
    <property type="entry name" value="S64752"/>
</dbReference>
<dbReference type="RefSeq" id="NP_013091.1">
    <property type="nucleotide sequence ID" value="NM_001181830.1"/>
</dbReference>
<dbReference type="SMR" id="Q07800"/>
<dbReference type="BioGRID" id="31241">
    <property type="interactions" value="139"/>
</dbReference>
<dbReference type="ComplexPortal" id="CPX-1317">
    <property type="entry name" value="WHI2-PSR1 phosphatase complex"/>
</dbReference>
<dbReference type="DIP" id="DIP-4182N"/>
<dbReference type="FunCoup" id="Q07800">
    <property type="interactions" value="105"/>
</dbReference>
<dbReference type="IntAct" id="Q07800">
    <property type="interactions" value="4"/>
</dbReference>
<dbReference type="MINT" id="Q07800"/>
<dbReference type="STRING" id="4932.YLL010C"/>
<dbReference type="iPTMnet" id="Q07800"/>
<dbReference type="SwissPalm" id="Q07800"/>
<dbReference type="PaxDb" id="4932-YLL010C"/>
<dbReference type="PeptideAtlas" id="Q07800"/>
<dbReference type="EnsemblFungi" id="YLL010C_mRNA">
    <property type="protein sequence ID" value="YLL010C"/>
    <property type="gene ID" value="YLL010C"/>
</dbReference>
<dbReference type="GeneID" id="850650"/>
<dbReference type="KEGG" id="sce:YLL010C"/>
<dbReference type="AGR" id="SGD:S000003933"/>
<dbReference type="SGD" id="S000003933">
    <property type="gene designation" value="PSR1"/>
</dbReference>
<dbReference type="VEuPathDB" id="FungiDB:YLL010C"/>
<dbReference type="eggNOG" id="KOG1605">
    <property type="taxonomic scope" value="Eukaryota"/>
</dbReference>
<dbReference type="GeneTree" id="ENSGT01040000240451"/>
<dbReference type="HOGENOM" id="CLU_020262_1_2_1"/>
<dbReference type="InParanoid" id="Q07800"/>
<dbReference type="OMA" id="IEATHYQ"/>
<dbReference type="OrthoDB" id="277011at2759"/>
<dbReference type="BioCyc" id="YEAST:G3O-32115-MONOMER"/>
<dbReference type="BioGRID-ORCS" id="850650">
    <property type="hits" value="0 hits in 10 CRISPR screens"/>
</dbReference>
<dbReference type="PRO" id="PR:Q07800"/>
<dbReference type="Proteomes" id="UP000002311">
    <property type="component" value="Chromosome XII"/>
</dbReference>
<dbReference type="RNAct" id="Q07800">
    <property type="molecule type" value="protein"/>
</dbReference>
<dbReference type="GO" id="GO:0005829">
    <property type="term" value="C:cytosol"/>
    <property type="evidence" value="ECO:0007005"/>
    <property type="project" value="SGD"/>
</dbReference>
<dbReference type="GO" id="GO:1903293">
    <property type="term" value="C:phosphatase complex"/>
    <property type="evidence" value="ECO:0000314"/>
    <property type="project" value="UniProtKB"/>
</dbReference>
<dbReference type="GO" id="GO:0005886">
    <property type="term" value="C:plasma membrane"/>
    <property type="evidence" value="ECO:0000314"/>
    <property type="project" value="SGD"/>
</dbReference>
<dbReference type="GO" id="GO:0004721">
    <property type="term" value="F:phosphoprotein phosphatase activity"/>
    <property type="evidence" value="ECO:0000314"/>
    <property type="project" value="SGD"/>
</dbReference>
<dbReference type="GO" id="GO:0034198">
    <property type="term" value="P:cellular response to amino acid starvation"/>
    <property type="evidence" value="ECO:0000315"/>
    <property type="project" value="SGD"/>
</dbReference>
<dbReference type="GO" id="GO:0034605">
    <property type="term" value="P:cellular response to heat"/>
    <property type="evidence" value="ECO:0000316"/>
    <property type="project" value="SGD"/>
</dbReference>
<dbReference type="GO" id="GO:1904262">
    <property type="term" value="P:negative regulation of TORC1 signaling"/>
    <property type="evidence" value="ECO:0000315"/>
    <property type="project" value="SGD"/>
</dbReference>
<dbReference type="GO" id="GO:0045944">
    <property type="term" value="P:positive regulation of transcription by RNA polymerase II"/>
    <property type="evidence" value="ECO:0000316"/>
    <property type="project" value="SGD"/>
</dbReference>
<dbReference type="GO" id="GO:0006470">
    <property type="term" value="P:protein dephosphorylation"/>
    <property type="evidence" value="ECO:0000315"/>
    <property type="project" value="UniProtKB"/>
</dbReference>
<dbReference type="GO" id="GO:0009651">
    <property type="term" value="P:response to salt stress"/>
    <property type="evidence" value="ECO:0000316"/>
    <property type="project" value="UniProtKB"/>
</dbReference>
<dbReference type="CDD" id="cd07521">
    <property type="entry name" value="HAD_FCP1-like"/>
    <property type="match status" value="1"/>
</dbReference>
<dbReference type="FunFam" id="3.40.50.1000:FF:000043">
    <property type="entry name" value="General stress response phosphoprotein phosphatase Psr1/2"/>
    <property type="match status" value="1"/>
</dbReference>
<dbReference type="Gene3D" id="3.40.50.1000">
    <property type="entry name" value="HAD superfamily/HAD-like"/>
    <property type="match status" value="1"/>
</dbReference>
<dbReference type="InterPro" id="IPR011948">
    <property type="entry name" value="Dullard_phosphatase"/>
</dbReference>
<dbReference type="InterPro" id="IPR004274">
    <property type="entry name" value="FCP1_dom"/>
</dbReference>
<dbReference type="InterPro" id="IPR036412">
    <property type="entry name" value="HAD-like_sf"/>
</dbReference>
<dbReference type="InterPro" id="IPR023214">
    <property type="entry name" value="HAD_sf"/>
</dbReference>
<dbReference type="InterPro" id="IPR050365">
    <property type="entry name" value="TIM50"/>
</dbReference>
<dbReference type="NCBIfam" id="TIGR02251">
    <property type="entry name" value="HIF-SF_euk"/>
    <property type="match status" value="1"/>
</dbReference>
<dbReference type="PANTHER" id="PTHR12210">
    <property type="entry name" value="DULLARD PROTEIN PHOSPHATASE"/>
    <property type="match status" value="1"/>
</dbReference>
<dbReference type="Pfam" id="PF03031">
    <property type="entry name" value="NIF"/>
    <property type="match status" value="1"/>
</dbReference>
<dbReference type="SMART" id="SM00577">
    <property type="entry name" value="CPDc"/>
    <property type="match status" value="1"/>
</dbReference>
<dbReference type="SUPFAM" id="SSF56784">
    <property type="entry name" value="HAD-like"/>
    <property type="match status" value="1"/>
</dbReference>
<dbReference type="PROSITE" id="PS50969">
    <property type="entry name" value="FCP1"/>
    <property type="match status" value="1"/>
</dbReference>
<proteinExistence type="evidence at protein level"/>